<protein>
    <recommendedName>
        <fullName evidence="1">Eukaryotic translation initiation factor 6-1</fullName>
        <shortName>AteIF-6;1</shortName>
    </recommendedName>
</protein>
<proteinExistence type="evidence at transcript level"/>
<organism>
    <name type="scientific">Arabidopsis thaliana</name>
    <name type="common">Mouse-ear cress</name>
    <dbReference type="NCBI Taxonomy" id="3702"/>
    <lineage>
        <taxon>Eukaryota</taxon>
        <taxon>Viridiplantae</taxon>
        <taxon>Streptophyta</taxon>
        <taxon>Embryophyta</taxon>
        <taxon>Tracheophyta</taxon>
        <taxon>Spermatophyta</taxon>
        <taxon>Magnoliopsida</taxon>
        <taxon>eudicotyledons</taxon>
        <taxon>Gunneridae</taxon>
        <taxon>Pentapetalae</taxon>
        <taxon>rosids</taxon>
        <taxon>malvids</taxon>
        <taxon>Brassicales</taxon>
        <taxon>Brassicaceae</taxon>
        <taxon>Camelineae</taxon>
        <taxon>Arabidopsis</taxon>
    </lineage>
</organism>
<evidence type="ECO:0000255" key="1">
    <source>
        <dbReference type="HAMAP-Rule" id="MF_03132"/>
    </source>
</evidence>
<evidence type="ECO:0000269" key="2">
    <source>
    </source>
</evidence>
<evidence type="ECO:0000305" key="3"/>
<feature type="chain" id="PRO_0000153739" description="Eukaryotic translation initiation factor 6-1">
    <location>
        <begin position="1"/>
        <end position="247"/>
    </location>
</feature>
<feature type="sequence conflict" description="In Ref. 3; BX821100." evidence="3" ref="3">
    <original>H</original>
    <variation>N</variation>
    <location>
        <position position="164"/>
    </location>
</feature>
<reference key="1">
    <citation type="journal article" date="1999" name="Nature">
        <title>Sequence and analysis of chromosome 2 of the plant Arabidopsis thaliana.</title>
        <authorList>
            <person name="Lin X."/>
            <person name="Kaul S."/>
            <person name="Rounsley S.D."/>
            <person name="Shea T.P."/>
            <person name="Benito M.-I."/>
            <person name="Town C.D."/>
            <person name="Fujii C.Y."/>
            <person name="Mason T.M."/>
            <person name="Bowman C.L."/>
            <person name="Barnstead M.E."/>
            <person name="Feldblyum T.V."/>
            <person name="Buell C.R."/>
            <person name="Ketchum K.A."/>
            <person name="Lee J.J."/>
            <person name="Ronning C.M."/>
            <person name="Koo H.L."/>
            <person name="Moffat K.S."/>
            <person name="Cronin L.A."/>
            <person name="Shen M."/>
            <person name="Pai G."/>
            <person name="Van Aken S."/>
            <person name="Umayam L."/>
            <person name="Tallon L.J."/>
            <person name="Gill J.E."/>
            <person name="Adams M.D."/>
            <person name="Carrera A.J."/>
            <person name="Creasy T.H."/>
            <person name="Goodman H.M."/>
            <person name="Somerville C.R."/>
            <person name="Copenhaver G.P."/>
            <person name="Preuss D."/>
            <person name="Nierman W.C."/>
            <person name="White O."/>
            <person name="Eisen J.A."/>
            <person name="Salzberg S.L."/>
            <person name="Fraser C.M."/>
            <person name="Venter J.C."/>
        </authorList>
    </citation>
    <scope>NUCLEOTIDE SEQUENCE [LARGE SCALE GENOMIC DNA]</scope>
    <source>
        <strain>cv. Columbia</strain>
    </source>
</reference>
<reference key="2">
    <citation type="journal article" date="2017" name="Plant J.">
        <title>Araport11: a complete reannotation of the Arabidopsis thaliana reference genome.</title>
        <authorList>
            <person name="Cheng C.Y."/>
            <person name="Krishnakumar V."/>
            <person name="Chan A.P."/>
            <person name="Thibaud-Nissen F."/>
            <person name="Schobel S."/>
            <person name="Town C.D."/>
        </authorList>
    </citation>
    <scope>GENOME REANNOTATION</scope>
    <source>
        <strain>cv. Columbia</strain>
    </source>
</reference>
<reference key="3">
    <citation type="journal article" date="2004" name="Genome Res.">
        <title>Whole genome sequence comparisons and 'full-length' cDNA sequences: a combined approach to evaluate and improve Arabidopsis genome annotation.</title>
        <authorList>
            <person name="Castelli V."/>
            <person name="Aury J.-M."/>
            <person name="Jaillon O."/>
            <person name="Wincker P."/>
            <person name="Clepet C."/>
            <person name="Menard M."/>
            <person name="Cruaud C."/>
            <person name="Quetier F."/>
            <person name="Scarpelli C."/>
            <person name="Schaechter V."/>
            <person name="Temple G."/>
            <person name="Caboche M."/>
            <person name="Weissenbach J."/>
            <person name="Salanoubat M."/>
        </authorList>
    </citation>
    <scope>NUCLEOTIDE SEQUENCE [LARGE SCALE MRNA]</scope>
    <source>
        <strain>cv. Columbia</strain>
    </source>
</reference>
<reference key="4">
    <citation type="journal article" date="2010" name="Biochem. Biophys. Res. Commun.">
        <title>Characterization of plant eukaryotic translation initiation factor 6 (eIF6) genes: The essential role in embryogenesis and their differential expression in Arabidopsis and rice.</title>
        <authorList>
            <person name="Kato Y."/>
            <person name="Konishi M."/>
            <person name="Shigyo M."/>
            <person name="Yoneyama T."/>
            <person name="Yanagisawa S."/>
        </authorList>
    </citation>
    <scope>FUNCTION</scope>
    <scope>DISRUPTION PHENOTYPE</scope>
</reference>
<gene>
    <name evidence="1" type="primary">EIF6-1</name>
    <name type="ordered locus">At2g39820</name>
    <name type="ORF">T5I7.12</name>
</gene>
<comment type="function">
    <text evidence="1 2">Binds to the 60S ribosomal subunit and prevents its association with the 40S ribosomal subunit to form the 80S initiation complex in the cytoplasm. May also be involved in ribosome biogenesis.</text>
</comment>
<comment type="subunit">
    <text evidence="1">Monomer. Associates with the 60S ribosomal subunit.</text>
</comment>
<comment type="subcellular location">
    <subcellularLocation>
        <location evidence="1">Cytoplasm</location>
    </subcellularLocation>
    <subcellularLocation>
        <location evidence="1">Nucleus</location>
        <location evidence="1">Nucleolus</location>
    </subcellularLocation>
    <text evidence="1">Shuttles between cytoplasm and nucleus/nucleolus.</text>
</comment>
<comment type="disruption phenotype">
    <text evidence="2">Causes embryonic lethality.</text>
</comment>
<comment type="similarity">
    <text evidence="1">Belongs to the eIF-6 family.</text>
</comment>
<keyword id="KW-0963">Cytoplasm</keyword>
<keyword id="KW-0396">Initiation factor</keyword>
<keyword id="KW-0539">Nucleus</keyword>
<keyword id="KW-0648">Protein biosynthesis</keyword>
<keyword id="KW-1185">Reference proteome</keyword>
<keyword id="KW-0690">Ribosome biogenesis</keyword>
<dbReference type="EMBL" id="AC003000">
    <property type="protein sequence ID" value="AAB87131.1"/>
    <property type="molecule type" value="Genomic_DNA"/>
</dbReference>
<dbReference type="EMBL" id="CP002685">
    <property type="protein sequence ID" value="AEC09735.1"/>
    <property type="molecule type" value="Genomic_DNA"/>
</dbReference>
<dbReference type="EMBL" id="BX821100">
    <property type="status" value="NOT_ANNOTATED_CDS"/>
    <property type="molecule type" value="mRNA"/>
</dbReference>
<dbReference type="PIR" id="T01012">
    <property type="entry name" value="T01012"/>
</dbReference>
<dbReference type="SMR" id="O22290"/>
<dbReference type="BioGRID" id="3907">
    <property type="interactions" value="1"/>
</dbReference>
<dbReference type="FunCoup" id="O22290">
    <property type="interactions" value="690"/>
</dbReference>
<dbReference type="STRING" id="3702.O22290"/>
<dbReference type="PaxDb" id="3702-AT2G39820.1"/>
<dbReference type="ProteomicsDB" id="228736"/>
<dbReference type="EnsemblPlants" id="AT2G39820.1">
    <property type="protein sequence ID" value="AT2G39820.1"/>
    <property type="gene ID" value="AT2G39820"/>
</dbReference>
<dbReference type="GeneID" id="818569"/>
<dbReference type="Gramene" id="AT2G39820.1">
    <property type="protein sequence ID" value="AT2G39820.1"/>
    <property type="gene ID" value="AT2G39820"/>
</dbReference>
<dbReference type="KEGG" id="ath:AT2G39820"/>
<dbReference type="Araport" id="AT2G39820"/>
<dbReference type="TAIR" id="AT2G39820">
    <property type="gene designation" value="EIF6B"/>
</dbReference>
<dbReference type="eggNOG" id="KOG3185">
    <property type="taxonomic scope" value="Eukaryota"/>
</dbReference>
<dbReference type="HOGENOM" id="CLU_071894_0_0_1"/>
<dbReference type="InParanoid" id="O22290"/>
<dbReference type="OMA" id="GNAIACN"/>
<dbReference type="PhylomeDB" id="O22290"/>
<dbReference type="PRO" id="PR:O22290"/>
<dbReference type="Proteomes" id="UP000006548">
    <property type="component" value="Chromosome 2"/>
</dbReference>
<dbReference type="ExpressionAtlas" id="O22290">
    <property type="expression patterns" value="baseline and differential"/>
</dbReference>
<dbReference type="GO" id="GO:0005829">
    <property type="term" value="C:cytosol"/>
    <property type="evidence" value="ECO:0000314"/>
    <property type="project" value="TAIR"/>
</dbReference>
<dbReference type="GO" id="GO:0005730">
    <property type="term" value="C:nucleolus"/>
    <property type="evidence" value="ECO:0007669"/>
    <property type="project" value="UniProtKB-SubCell"/>
</dbReference>
<dbReference type="GO" id="GO:0005634">
    <property type="term" value="C:nucleus"/>
    <property type="evidence" value="ECO:0000314"/>
    <property type="project" value="TAIR"/>
</dbReference>
<dbReference type="GO" id="GO:0043023">
    <property type="term" value="F:ribosomal large subunit binding"/>
    <property type="evidence" value="ECO:0007669"/>
    <property type="project" value="UniProtKB-UniRule"/>
</dbReference>
<dbReference type="GO" id="GO:0003743">
    <property type="term" value="F:translation initiation factor activity"/>
    <property type="evidence" value="ECO:0007669"/>
    <property type="project" value="UniProtKB-UniRule"/>
</dbReference>
<dbReference type="GO" id="GO:0042256">
    <property type="term" value="P:cytosolic ribosome assembly"/>
    <property type="evidence" value="ECO:0007669"/>
    <property type="project" value="UniProtKB-UniRule"/>
</dbReference>
<dbReference type="GO" id="GO:0042273">
    <property type="term" value="P:ribosomal large subunit biogenesis"/>
    <property type="evidence" value="ECO:0007669"/>
    <property type="project" value="UniProtKB-UniRule"/>
</dbReference>
<dbReference type="CDD" id="cd00527">
    <property type="entry name" value="IF6"/>
    <property type="match status" value="1"/>
</dbReference>
<dbReference type="FunFam" id="3.75.10.10:FF:000006">
    <property type="entry name" value="Eukaryotic translation initiation factor 6"/>
    <property type="match status" value="1"/>
</dbReference>
<dbReference type="Gene3D" id="3.75.10.10">
    <property type="entry name" value="L-arginine/glycine Amidinotransferase, Chain A"/>
    <property type="match status" value="1"/>
</dbReference>
<dbReference type="HAMAP" id="MF_00032">
    <property type="entry name" value="eIF_6"/>
    <property type="match status" value="1"/>
</dbReference>
<dbReference type="InterPro" id="IPR002769">
    <property type="entry name" value="eIF6"/>
</dbReference>
<dbReference type="NCBIfam" id="TIGR00323">
    <property type="entry name" value="eIF-6"/>
    <property type="match status" value="1"/>
</dbReference>
<dbReference type="PANTHER" id="PTHR10784">
    <property type="entry name" value="TRANSLATION INITIATION FACTOR 6"/>
    <property type="match status" value="1"/>
</dbReference>
<dbReference type="Pfam" id="PF01912">
    <property type="entry name" value="eIF-6"/>
    <property type="match status" value="1"/>
</dbReference>
<dbReference type="PIRSF" id="PIRSF006413">
    <property type="entry name" value="IF-6"/>
    <property type="match status" value="1"/>
</dbReference>
<dbReference type="SMART" id="SM00654">
    <property type="entry name" value="eIF6"/>
    <property type="match status" value="1"/>
</dbReference>
<dbReference type="SUPFAM" id="SSF55909">
    <property type="entry name" value="Pentein"/>
    <property type="match status" value="1"/>
</dbReference>
<accession>O22290</accession>
<name>IF61_ARATH</name>
<sequence length="247" mass="26511">MATRLQYDNNNCEIGVFSKLTNAYCLVSATSASANFFTGYESKLKGVIPIVTTSIGGSGTIGSLCVGNKNGLLLSHTITDQELQHLRDSLPDEVVVQRIEEPICALGNAIACNDYVALVHPKLEKDTEEIISDVLGVEVYRQTIANNELVGSYCSLSNNGGMVHSNTNVEEMVELANLVQVPLVAGTVNRGSQVISAGLTVNDWTAFCGSDTTAVELSVVNNIFKLVQSQPDFVGSEMRKSLIDTYV</sequence>